<gene>
    <name evidence="1" type="primary">rnt</name>
    <name type="ordered locus">c2045</name>
</gene>
<feature type="chain" id="PRO_0000208961" description="Ribonuclease T">
    <location>
        <begin position="1"/>
        <end position="215"/>
    </location>
</feature>
<feature type="domain" description="Exonuclease" evidence="1">
    <location>
        <begin position="20"/>
        <end position="194"/>
    </location>
</feature>
<feature type="active site" description="Proton donor/acceptor" evidence="1">
    <location>
        <position position="181"/>
    </location>
</feature>
<feature type="binding site" evidence="1">
    <location>
        <position position="23"/>
    </location>
    <ligand>
        <name>Mg(2+)</name>
        <dbReference type="ChEBI" id="CHEBI:18420"/>
        <label>1</label>
        <note>catalytic</note>
    </ligand>
</feature>
<feature type="binding site" evidence="1">
    <location>
        <position position="23"/>
    </location>
    <ligand>
        <name>Mg(2+)</name>
        <dbReference type="ChEBI" id="CHEBI:18420"/>
        <label>2</label>
        <note>catalytic</note>
    </ligand>
</feature>
<feature type="binding site" evidence="1">
    <location>
        <position position="25"/>
    </location>
    <ligand>
        <name>Mg(2+)</name>
        <dbReference type="ChEBI" id="CHEBI:18420"/>
        <label>2</label>
        <note>catalytic</note>
    </ligand>
</feature>
<feature type="binding site" evidence="1">
    <location>
        <position position="181"/>
    </location>
    <ligand>
        <name>Mg(2+)</name>
        <dbReference type="ChEBI" id="CHEBI:18420"/>
        <label>2</label>
        <note>catalytic</note>
    </ligand>
</feature>
<feature type="binding site" evidence="1">
    <location>
        <position position="186"/>
    </location>
    <ligand>
        <name>Mg(2+)</name>
        <dbReference type="ChEBI" id="CHEBI:18420"/>
        <label>2</label>
        <note>catalytic</note>
    </ligand>
</feature>
<feature type="site" description="Important for substrate binding and specificity" evidence="1">
    <location>
        <position position="29"/>
    </location>
</feature>
<feature type="site" description="Important for substrate binding and specificity" evidence="1">
    <location>
        <position position="77"/>
    </location>
</feature>
<feature type="site" description="Important for substrate binding and specificity" evidence="1">
    <location>
        <position position="124"/>
    </location>
</feature>
<feature type="site" description="Important for substrate binding and specificity" evidence="1">
    <location>
        <position position="146"/>
    </location>
</feature>
<comment type="function">
    <text evidence="1">Trims short 3' overhangs of a variety of RNA species, leaving a one or two nucleotide 3' overhang. Responsible for the end-turnover of tRNA: specifically removes the terminal AMP residue from uncharged tRNA (tRNA-C-C-A). Also appears to be involved in tRNA biosynthesis.</text>
</comment>
<comment type="cofactor">
    <cofactor evidence="1">
        <name>Mg(2+)</name>
        <dbReference type="ChEBI" id="CHEBI:18420"/>
    </cofactor>
    <text evidence="1">Binds two Mg(2+) per subunit. The active form of the enzyme binds two Mg(2+) ions in its active site. The first Mg(2+) forms only one salt bridge with the protein.</text>
</comment>
<comment type="subunit">
    <text evidence="1">Homodimer.</text>
</comment>
<comment type="similarity">
    <text evidence="1">Belongs to the RNase T family.</text>
</comment>
<reference key="1">
    <citation type="journal article" date="2002" name="Proc. Natl. Acad. Sci. U.S.A.">
        <title>Extensive mosaic structure revealed by the complete genome sequence of uropathogenic Escherichia coli.</title>
        <authorList>
            <person name="Welch R.A."/>
            <person name="Burland V."/>
            <person name="Plunkett G. III"/>
            <person name="Redford P."/>
            <person name="Roesch P."/>
            <person name="Rasko D."/>
            <person name="Buckles E.L."/>
            <person name="Liou S.-R."/>
            <person name="Boutin A."/>
            <person name="Hackett J."/>
            <person name="Stroud D."/>
            <person name="Mayhew G.F."/>
            <person name="Rose D.J."/>
            <person name="Zhou S."/>
            <person name="Schwartz D.C."/>
            <person name="Perna N.T."/>
            <person name="Mobley H.L.T."/>
            <person name="Donnenberg M.S."/>
            <person name="Blattner F.R."/>
        </authorList>
    </citation>
    <scope>NUCLEOTIDE SEQUENCE [LARGE SCALE GENOMIC DNA]</scope>
    <source>
        <strain>CFT073 / ATCC 700928 / UPEC</strain>
    </source>
</reference>
<organism>
    <name type="scientific">Escherichia coli O6:H1 (strain CFT073 / ATCC 700928 / UPEC)</name>
    <dbReference type="NCBI Taxonomy" id="199310"/>
    <lineage>
        <taxon>Bacteria</taxon>
        <taxon>Pseudomonadati</taxon>
        <taxon>Pseudomonadota</taxon>
        <taxon>Gammaproteobacteria</taxon>
        <taxon>Enterobacterales</taxon>
        <taxon>Enterobacteriaceae</taxon>
        <taxon>Escherichia</taxon>
    </lineage>
</organism>
<accession>P66681</accession>
<accession>Q8X627</accession>
<evidence type="ECO:0000255" key="1">
    <source>
        <dbReference type="HAMAP-Rule" id="MF_00157"/>
    </source>
</evidence>
<protein>
    <recommendedName>
        <fullName evidence="1">Ribonuclease T</fullName>
        <ecNumber evidence="1">3.1.13.-</ecNumber>
    </recommendedName>
    <alternativeName>
        <fullName evidence="1">Exoribonuclease T</fullName>
        <shortName evidence="1">RNase T</shortName>
    </alternativeName>
</protein>
<sequence>MSDNAQLTGLCDRFRGFYPVVIDVETAGFNAKTDALLEIAAITLKMDEQGWLMPDTTLHFHVEPFVGANLQPEALAFNGIDPNDPDRGAVSEYEALHEIFKVVRKGIKASGCNRAIMVAHNANFDHSFMMAAAERASLKRNPFHPFATFDTAALAGLALGQTVLSKACQTAGMDFDSTQAHSALYDTERTAVLFCEIVNRWKRLGGWPLPAAEEV</sequence>
<dbReference type="EC" id="3.1.13.-" evidence="1"/>
<dbReference type="EMBL" id="AE014075">
    <property type="protein sequence ID" value="AAN80505.1"/>
    <property type="molecule type" value="Genomic_DNA"/>
</dbReference>
<dbReference type="RefSeq" id="WP_001282281.1">
    <property type="nucleotide sequence ID" value="NZ_CP051263.1"/>
</dbReference>
<dbReference type="SMR" id="P66681"/>
<dbReference type="STRING" id="199310.c2045"/>
<dbReference type="GeneID" id="93775806"/>
<dbReference type="KEGG" id="ecc:c2045"/>
<dbReference type="eggNOG" id="COG0847">
    <property type="taxonomic scope" value="Bacteria"/>
</dbReference>
<dbReference type="HOGENOM" id="CLU_082724_0_0_6"/>
<dbReference type="BioCyc" id="ECOL199310:C2045-MONOMER"/>
<dbReference type="Proteomes" id="UP000001410">
    <property type="component" value="Chromosome"/>
</dbReference>
<dbReference type="GO" id="GO:0005829">
    <property type="term" value="C:cytosol"/>
    <property type="evidence" value="ECO:0007669"/>
    <property type="project" value="TreeGrafter"/>
</dbReference>
<dbReference type="GO" id="GO:0008408">
    <property type="term" value="F:3'-5' exonuclease activity"/>
    <property type="evidence" value="ECO:0007669"/>
    <property type="project" value="TreeGrafter"/>
</dbReference>
<dbReference type="GO" id="GO:0000287">
    <property type="term" value="F:magnesium ion binding"/>
    <property type="evidence" value="ECO:0007669"/>
    <property type="project" value="UniProtKB-UniRule"/>
</dbReference>
<dbReference type="GO" id="GO:0003676">
    <property type="term" value="F:nucleic acid binding"/>
    <property type="evidence" value="ECO:0007669"/>
    <property type="project" value="InterPro"/>
</dbReference>
<dbReference type="GO" id="GO:0016896">
    <property type="term" value="F:RNA exonuclease activity, producing 5'-phosphomonoesters"/>
    <property type="evidence" value="ECO:0007669"/>
    <property type="project" value="UniProtKB-UniRule"/>
</dbReference>
<dbReference type="GO" id="GO:0045004">
    <property type="term" value="P:DNA replication proofreading"/>
    <property type="evidence" value="ECO:0007669"/>
    <property type="project" value="TreeGrafter"/>
</dbReference>
<dbReference type="GO" id="GO:0008033">
    <property type="term" value="P:tRNA processing"/>
    <property type="evidence" value="ECO:0007669"/>
    <property type="project" value="UniProtKB-KW"/>
</dbReference>
<dbReference type="CDD" id="cd06134">
    <property type="entry name" value="RNaseT"/>
    <property type="match status" value="1"/>
</dbReference>
<dbReference type="FunFam" id="3.30.420.10:FF:000009">
    <property type="entry name" value="Ribonuclease T"/>
    <property type="match status" value="1"/>
</dbReference>
<dbReference type="Gene3D" id="3.30.420.10">
    <property type="entry name" value="Ribonuclease H-like superfamily/Ribonuclease H"/>
    <property type="match status" value="1"/>
</dbReference>
<dbReference type="HAMAP" id="MF_00157">
    <property type="entry name" value="RNase_T"/>
    <property type="match status" value="1"/>
</dbReference>
<dbReference type="InterPro" id="IPR013520">
    <property type="entry name" value="Exonuclease_RNaseT/DNA_pol3"/>
</dbReference>
<dbReference type="InterPro" id="IPR005987">
    <property type="entry name" value="RNase_T"/>
</dbReference>
<dbReference type="InterPro" id="IPR012337">
    <property type="entry name" value="RNaseH-like_sf"/>
</dbReference>
<dbReference type="InterPro" id="IPR036397">
    <property type="entry name" value="RNaseH_sf"/>
</dbReference>
<dbReference type="NCBIfam" id="TIGR01298">
    <property type="entry name" value="RNaseT"/>
    <property type="match status" value="1"/>
</dbReference>
<dbReference type="PANTHER" id="PTHR30231">
    <property type="entry name" value="DNA POLYMERASE III SUBUNIT EPSILON"/>
    <property type="match status" value="1"/>
</dbReference>
<dbReference type="PANTHER" id="PTHR30231:SF2">
    <property type="entry name" value="RIBONUCLEASE T"/>
    <property type="match status" value="1"/>
</dbReference>
<dbReference type="Pfam" id="PF00929">
    <property type="entry name" value="RNase_T"/>
    <property type="match status" value="1"/>
</dbReference>
<dbReference type="SMART" id="SM00479">
    <property type="entry name" value="EXOIII"/>
    <property type="match status" value="1"/>
</dbReference>
<dbReference type="SUPFAM" id="SSF53098">
    <property type="entry name" value="Ribonuclease H-like"/>
    <property type="match status" value="1"/>
</dbReference>
<name>RNT_ECOL6</name>
<keyword id="KW-0269">Exonuclease</keyword>
<keyword id="KW-0378">Hydrolase</keyword>
<keyword id="KW-0460">Magnesium</keyword>
<keyword id="KW-0479">Metal-binding</keyword>
<keyword id="KW-0540">Nuclease</keyword>
<keyword id="KW-1185">Reference proteome</keyword>
<keyword id="KW-0819">tRNA processing</keyword>
<proteinExistence type="inferred from homology"/>